<dbReference type="EC" id="3.6.-.-" evidence="1"/>
<dbReference type="EMBL" id="CP000003">
    <property type="protein sequence ID" value="AAT86946.1"/>
    <property type="molecule type" value="Genomic_DNA"/>
</dbReference>
<dbReference type="RefSeq" id="WP_011184480.1">
    <property type="nucleotide sequence ID" value="NC_006086.1"/>
</dbReference>
<dbReference type="SMR" id="Q5XCB7"/>
<dbReference type="KEGG" id="spa:M6_Spy0811"/>
<dbReference type="HOGENOM" id="CLU_019624_4_1_9"/>
<dbReference type="Proteomes" id="UP000001167">
    <property type="component" value="Chromosome"/>
</dbReference>
<dbReference type="GO" id="GO:0005829">
    <property type="term" value="C:cytosol"/>
    <property type="evidence" value="ECO:0007669"/>
    <property type="project" value="TreeGrafter"/>
</dbReference>
<dbReference type="GO" id="GO:0005525">
    <property type="term" value="F:GTP binding"/>
    <property type="evidence" value="ECO:0007669"/>
    <property type="project" value="UniProtKB-UniRule"/>
</dbReference>
<dbReference type="GO" id="GO:0003924">
    <property type="term" value="F:GTPase activity"/>
    <property type="evidence" value="ECO:0007669"/>
    <property type="project" value="UniProtKB-UniRule"/>
</dbReference>
<dbReference type="GO" id="GO:0046872">
    <property type="term" value="F:metal ion binding"/>
    <property type="evidence" value="ECO:0007669"/>
    <property type="project" value="UniProtKB-KW"/>
</dbReference>
<dbReference type="GO" id="GO:0030488">
    <property type="term" value="P:tRNA methylation"/>
    <property type="evidence" value="ECO:0007669"/>
    <property type="project" value="TreeGrafter"/>
</dbReference>
<dbReference type="GO" id="GO:0002098">
    <property type="term" value="P:tRNA wobble uridine modification"/>
    <property type="evidence" value="ECO:0007669"/>
    <property type="project" value="TreeGrafter"/>
</dbReference>
<dbReference type="CDD" id="cd04164">
    <property type="entry name" value="trmE"/>
    <property type="match status" value="1"/>
</dbReference>
<dbReference type="CDD" id="cd14858">
    <property type="entry name" value="TrmE_N"/>
    <property type="match status" value="1"/>
</dbReference>
<dbReference type="FunFam" id="3.30.1360.120:FF:000003">
    <property type="entry name" value="tRNA modification GTPase MnmE"/>
    <property type="match status" value="1"/>
</dbReference>
<dbReference type="FunFam" id="3.40.50.300:FF:000494">
    <property type="entry name" value="tRNA modification GTPase MnmE"/>
    <property type="match status" value="1"/>
</dbReference>
<dbReference type="Gene3D" id="3.40.50.300">
    <property type="entry name" value="P-loop containing nucleotide triphosphate hydrolases"/>
    <property type="match status" value="1"/>
</dbReference>
<dbReference type="Gene3D" id="3.30.1360.120">
    <property type="entry name" value="Probable tRNA modification gtpase trme, domain 1"/>
    <property type="match status" value="1"/>
</dbReference>
<dbReference type="Gene3D" id="1.20.120.430">
    <property type="entry name" value="tRNA modification GTPase MnmE domain 2"/>
    <property type="match status" value="1"/>
</dbReference>
<dbReference type="HAMAP" id="MF_00379">
    <property type="entry name" value="GTPase_MnmE"/>
    <property type="match status" value="1"/>
</dbReference>
<dbReference type="InterPro" id="IPR031168">
    <property type="entry name" value="G_TrmE"/>
</dbReference>
<dbReference type="InterPro" id="IPR006073">
    <property type="entry name" value="GTP-bd"/>
</dbReference>
<dbReference type="InterPro" id="IPR018948">
    <property type="entry name" value="GTP-bd_TrmE_N"/>
</dbReference>
<dbReference type="InterPro" id="IPR004520">
    <property type="entry name" value="GTPase_MnmE"/>
</dbReference>
<dbReference type="InterPro" id="IPR027368">
    <property type="entry name" value="MnmE_dom2"/>
</dbReference>
<dbReference type="InterPro" id="IPR025867">
    <property type="entry name" value="MnmE_helical"/>
</dbReference>
<dbReference type="InterPro" id="IPR027417">
    <property type="entry name" value="P-loop_NTPase"/>
</dbReference>
<dbReference type="InterPro" id="IPR005225">
    <property type="entry name" value="Small_GTP-bd"/>
</dbReference>
<dbReference type="InterPro" id="IPR027266">
    <property type="entry name" value="TrmE/GcvT_dom1"/>
</dbReference>
<dbReference type="NCBIfam" id="TIGR00450">
    <property type="entry name" value="mnmE_trmE_thdF"/>
    <property type="match status" value="1"/>
</dbReference>
<dbReference type="NCBIfam" id="NF003661">
    <property type="entry name" value="PRK05291.1-3"/>
    <property type="match status" value="1"/>
</dbReference>
<dbReference type="NCBIfam" id="TIGR00231">
    <property type="entry name" value="small_GTP"/>
    <property type="match status" value="1"/>
</dbReference>
<dbReference type="PANTHER" id="PTHR42714">
    <property type="entry name" value="TRNA MODIFICATION GTPASE GTPBP3"/>
    <property type="match status" value="1"/>
</dbReference>
<dbReference type="PANTHER" id="PTHR42714:SF2">
    <property type="entry name" value="TRNA MODIFICATION GTPASE GTPBP3, MITOCHONDRIAL"/>
    <property type="match status" value="1"/>
</dbReference>
<dbReference type="Pfam" id="PF01926">
    <property type="entry name" value="MMR_HSR1"/>
    <property type="match status" value="1"/>
</dbReference>
<dbReference type="Pfam" id="PF12631">
    <property type="entry name" value="MnmE_helical"/>
    <property type="match status" value="1"/>
</dbReference>
<dbReference type="Pfam" id="PF10396">
    <property type="entry name" value="TrmE_N"/>
    <property type="match status" value="1"/>
</dbReference>
<dbReference type="SUPFAM" id="SSF52540">
    <property type="entry name" value="P-loop containing nucleoside triphosphate hydrolases"/>
    <property type="match status" value="1"/>
</dbReference>
<dbReference type="SUPFAM" id="SSF116878">
    <property type="entry name" value="TrmE connector domain"/>
    <property type="match status" value="1"/>
</dbReference>
<dbReference type="PROSITE" id="PS51709">
    <property type="entry name" value="G_TRME"/>
    <property type="match status" value="1"/>
</dbReference>
<name>MNME_STRP6</name>
<evidence type="ECO:0000255" key="1">
    <source>
        <dbReference type="HAMAP-Rule" id="MF_00379"/>
    </source>
</evidence>
<feature type="chain" id="PRO_0000188933" description="tRNA modification GTPase MnmE">
    <location>
        <begin position="1"/>
        <end position="458"/>
    </location>
</feature>
<feature type="domain" description="TrmE-type G">
    <location>
        <begin position="224"/>
        <end position="378"/>
    </location>
</feature>
<feature type="binding site" evidence="1">
    <location>
        <position position="26"/>
    </location>
    <ligand>
        <name>(6S)-5-formyl-5,6,7,8-tetrahydrofolate</name>
        <dbReference type="ChEBI" id="CHEBI:57457"/>
    </ligand>
</feature>
<feature type="binding site" evidence="1">
    <location>
        <position position="88"/>
    </location>
    <ligand>
        <name>(6S)-5-formyl-5,6,7,8-tetrahydrofolate</name>
        <dbReference type="ChEBI" id="CHEBI:57457"/>
    </ligand>
</feature>
<feature type="binding site" evidence="1">
    <location>
        <position position="127"/>
    </location>
    <ligand>
        <name>(6S)-5-formyl-5,6,7,8-tetrahydrofolate</name>
        <dbReference type="ChEBI" id="CHEBI:57457"/>
    </ligand>
</feature>
<feature type="binding site" evidence="1">
    <location>
        <begin position="234"/>
        <end position="239"/>
    </location>
    <ligand>
        <name>GTP</name>
        <dbReference type="ChEBI" id="CHEBI:37565"/>
    </ligand>
</feature>
<feature type="binding site" evidence="1">
    <location>
        <position position="234"/>
    </location>
    <ligand>
        <name>K(+)</name>
        <dbReference type="ChEBI" id="CHEBI:29103"/>
    </ligand>
</feature>
<feature type="binding site" evidence="1">
    <location>
        <position position="238"/>
    </location>
    <ligand>
        <name>Mg(2+)</name>
        <dbReference type="ChEBI" id="CHEBI:18420"/>
    </ligand>
</feature>
<feature type="binding site" evidence="1">
    <location>
        <begin position="253"/>
        <end position="259"/>
    </location>
    <ligand>
        <name>GTP</name>
        <dbReference type="ChEBI" id="CHEBI:37565"/>
    </ligand>
</feature>
<feature type="binding site" evidence="1">
    <location>
        <position position="253"/>
    </location>
    <ligand>
        <name>K(+)</name>
        <dbReference type="ChEBI" id="CHEBI:29103"/>
    </ligand>
</feature>
<feature type="binding site" evidence="1">
    <location>
        <position position="255"/>
    </location>
    <ligand>
        <name>K(+)</name>
        <dbReference type="ChEBI" id="CHEBI:29103"/>
    </ligand>
</feature>
<feature type="binding site" evidence="1">
    <location>
        <position position="258"/>
    </location>
    <ligand>
        <name>K(+)</name>
        <dbReference type="ChEBI" id="CHEBI:29103"/>
    </ligand>
</feature>
<feature type="binding site" evidence="1">
    <location>
        <position position="259"/>
    </location>
    <ligand>
        <name>Mg(2+)</name>
        <dbReference type="ChEBI" id="CHEBI:18420"/>
    </ligand>
</feature>
<feature type="binding site" evidence="1">
    <location>
        <begin position="278"/>
        <end position="281"/>
    </location>
    <ligand>
        <name>GTP</name>
        <dbReference type="ChEBI" id="CHEBI:37565"/>
    </ligand>
</feature>
<feature type="binding site" evidence="1">
    <location>
        <position position="458"/>
    </location>
    <ligand>
        <name>(6S)-5-formyl-5,6,7,8-tetrahydrofolate</name>
        <dbReference type="ChEBI" id="CHEBI:57457"/>
    </ligand>
</feature>
<protein>
    <recommendedName>
        <fullName evidence="1">tRNA modification GTPase MnmE</fullName>
        <ecNumber evidence="1">3.6.-.-</ecNumber>
    </recommendedName>
</protein>
<proteinExistence type="inferred from homology"/>
<reference key="1">
    <citation type="journal article" date="2004" name="J. Infect. Dis.">
        <title>Progress toward characterization of the group A Streptococcus metagenome: complete genome sequence of a macrolide-resistant serotype M6 strain.</title>
        <authorList>
            <person name="Banks D.J."/>
            <person name="Porcella S.F."/>
            <person name="Barbian K.D."/>
            <person name="Beres S.B."/>
            <person name="Philips L.E."/>
            <person name="Voyich J.M."/>
            <person name="DeLeo F.R."/>
            <person name="Martin J.M."/>
            <person name="Somerville G.A."/>
            <person name="Musser J.M."/>
        </authorList>
    </citation>
    <scope>NUCLEOTIDE SEQUENCE [LARGE SCALE GENOMIC DNA]</scope>
    <source>
        <strain>ATCC BAA-946 / MGAS10394</strain>
    </source>
</reference>
<comment type="function">
    <text evidence="1">Exhibits a very high intrinsic GTPase hydrolysis rate. Involved in the addition of a carboxymethylaminomethyl (cmnm) group at the wobble position (U34) of certain tRNAs, forming tRNA-cmnm(5)s(2)U34.</text>
</comment>
<comment type="cofactor">
    <cofactor evidence="1">
        <name>K(+)</name>
        <dbReference type="ChEBI" id="CHEBI:29103"/>
    </cofactor>
    <text evidence="1">Binds 1 potassium ion per subunit.</text>
</comment>
<comment type="subunit">
    <text evidence="1">Homodimer. Heterotetramer of two MnmE and two MnmG subunits.</text>
</comment>
<comment type="subcellular location">
    <subcellularLocation>
        <location evidence="1">Cytoplasm</location>
    </subcellularLocation>
</comment>
<comment type="similarity">
    <text evidence="1">Belongs to the TRAFAC class TrmE-Era-EngA-EngB-Septin-like GTPase superfamily. TrmE GTPase family.</text>
</comment>
<gene>
    <name evidence="1" type="primary">mnmE</name>
    <name evidence="1" type="synonym">trmE</name>
    <name type="ordered locus">M6_Spy0811</name>
</gene>
<sequence>MSITKEFDTITAISTPLGEGAIGIVRLSGTDALAIAQSVFKGKNLEQVASHTINYGHIIDPKTGTIIDEVMVSVMLAPKTFTRENVVEINTHGGIAVTNEILQLLIRQGARMAEPGEFTKRAFLNGRVDLTQAEAVMDIIRAKTDKAMTIAVKQLDGSLSQLINDTRQEILNTLAQVEVNIDYPEYDDVEEMTTALLREKTQEFQSLLENLLRTAKRGKILREGLSTAIIGRPNVGKSSLLNNLLREDKAIVTDIAGTTRDVIEEYVNIKGVPLKLVDTAGIRETDDLVEQIGVERSKKALQESDLVLLVLNASEKLTDQDRALLNLSQDSNRIILLNKTDLEQKIELEQLPDDYIPISVLTNQNINLIEDRINQLFFDNAGLVEQDATYLSNARHISLIEKAVQSLEAVNDGLALGMPVDLLQVDLTRTWEILGEITGDAAPDELITQLFSQFCLGK</sequence>
<organism>
    <name type="scientific">Streptococcus pyogenes serotype M6 (strain ATCC BAA-946 / MGAS10394)</name>
    <dbReference type="NCBI Taxonomy" id="286636"/>
    <lineage>
        <taxon>Bacteria</taxon>
        <taxon>Bacillati</taxon>
        <taxon>Bacillota</taxon>
        <taxon>Bacilli</taxon>
        <taxon>Lactobacillales</taxon>
        <taxon>Streptococcaceae</taxon>
        <taxon>Streptococcus</taxon>
    </lineage>
</organism>
<accession>Q5XCB7</accession>
<keyword id="KW-0963">Cytoplasm</keyword>
<keyword id="KW-0342">GTP-binding</keyword>
<keyword id="KW-0378">Hydrolase</keyword>
<keyword id="KW-0460">Magnesium</keyword>
<keyword id="KW-0479">Metal-binding</keyword>
<keyword id="KW-0547">Nucleotide-binding</keyword>
<keyword id="KW-0630">Potassium</keyword>
<keyword id="KW-0819">tRNA processing</keyword>